<gene>
    <name type="ordered locus">MT2067</name>
</gene>
<feature type="chain" id="PRO_0000427454" description="Uncharacterized protein MT2067">
    <location>
        <begin position="1"/>
        <end position="164"/>
    </location>
</feature>
<accession>P9WLM2</accession>
<accession>L0TB89</accession>
<accession>P64929</accession>
<accession>Q10845</accession>
<reference key="1">
    <citation type="journal article" date="2002" name="J. Bacteriol.">
        <title>Whole-genome comparison of Mycobacterium tuberculosis clinical and laboratory strains.</title>
        <authorList>
            <person name="Fleischmann R.D."/>
            <person name="Alland D."/>
            <person name="Eisen J.A."/>
            <person name="Carpenter L."/>
            <person name="White O."/>
            <person name="Peterson J.D."/>
            <person name="DeBoy R.T."/>
            <person name="Dodson R.J."/>
            <person name="Gwinn M.L."/>
            <person name="Haft D.H."/>
            <person name="Hickey E.K."/>
            <person name="Kolonay J.F."/>
            <person name="Nelson W.C."/>
            <person name="Umayam L.A."/>
            <person name="Ermolaeva M.D."/>
            <person name="Salzberg S.L."/>
            <person name="Delcher A."/>
            <person name="Utterback T.R."/>
            <person name="Weidman J.F."/>
            <person name="Khouri H.M."/>
            <person name="Gill J."/>
            <person name="Mikula A."/>
            <person name="Bishai W."/>
            <person name="Jacobs W.R. Jr."/>
            <person name="Venter J.C."/>
            <person name="Fraser C.M."/>
        </authorList>
    </citation>
    <scope>NUCLEOTIDE SEQUENCE [LARGE SCALE GENOMIC DNA]</scope>
    <source>
        <strain>CDC 1551 / Oshkosh</strain>
    </source>
</reference>
<name>Y2012_MYCTO</name>
<organism>
    <name type="scientific">Mycobacterium tuberculosis (strain CDC 1551 / Oshkosh)</name>
    <dbReference type="NCBI Taxonomy" id="83331"/>
    <lineage>
        <taxon>Bacteria</taxon>
        <taxon>Bacillati</taxon>
        <taxon>Actinomycetota</taxon>
        <taxon>Actinomycetes</taxon>
        <taxon>Mycobacteriales</taxon>
        <taxon>Mycobacteriaceae</taxon>
        <taxon>Mycobacterium</taxon>
        <taxon>Mycobacterium tuberculosis complex</taxon>
    </lineage>
</organism>
<sequence length="164" mass="18203">MLSKSKRSCRRRETLRIGEKMSAPITNLQAAQRDAIMNRPAVNGFPHLAETLRRAGVRTNTWWLPAMQSLYETDYGPVLDQGVPLIDGVAEVPAFDRTALVTALRADQAGQTSFREFAAAAWRAGVLRYVVDLENRTCTYFGLHDQTYMEHYAAVEPSGGAPTS</sequence>
<protein>
    <recommendedName>
        <fullName>Uncharacterized protein MT2067</fullName>
    </recommendedName>
</protein>
<dbReference type="EMBL" id="AE000516">
    <property type="protein sequence ID" value="AAK46345.1"/>
    <property type="molecule type" value="Genomic_DNA"/>
</dbReference>
<dbReference type="PIR" id="B70760">
    <property type="entry name" value="B70760"/>
</dbReference>
<dbReference type="SMR" id="P9WLM2"/>
<dbReference type="KEGG" id="mtc:MT2067"/>
<dbReference type="PATRIC" id="fig|83331.31.peg.2228"/>
<dbReference type="HOGENOM" id="CLU_1863820_0_0_11"/>
<dbReference type="Proteomes" id="UP000001020">
    <property type="component" value="Chromosome"/>
</dbReference>
<dbReference type="Gene3D" id="3.30.1810.10">
    <property type="entry name" value="YdfO-like"/>
    <property type="match status" value="1"/>
</dbReference>
<dbReference type="InterPro" id="IPR009833">
    <property type="entry name" value="DUF1398"/>
</dbReference>
<dbReference type="InterPro" id="IPR036696">
    <property type="entry name" value="YdfO-like_sf"/>
</dbReference>
<dbReference type="Pfam" id="PF07166">
    <property type="entry name" value="DUF1398"/>
    <property type="match status" value="1"/>
</dbReference>
<dbReference type="SUPFAM" id="SSF160419">
    <property type="entry name" value="YdfO-like"/>
    <property type="match status" value="1"/>
</dbReference>
<proteinExistence type="predicted"/>
<keyword id="KW-1185">Reference proteome</keyword>